<keyword id="KW-0963">Cytoplasm</keyword>
<keyword id="KW-0251">Elongation factor</keyword>
<keyword id="KW-0342">GTP-binding</keyword>
<keyword id="KW-0378">Hydrolase</keyword>
<keyword id="KW-0460">Magnesium</keyword>
<keyword id="KW-0479">Metal-binding</keyword>
<keyword id="KW-0547">Nucleotide-binding</keyword>
<keyword id="KW-0648">Protein biosynthesis</keyword>
<sequence length="393" mass="43110">MAKEAYKRDKPHVNIGTIGHVDHGKTTLTAAITSVLAKAGNAEMREFGDIDKAPEERERGITISTAHVEYQTEKRHYAHIDCPGHADYIKNMITGAAQMDGAILVVAGTDGPMPQTREHILLARQVNVPALVVFLNKVDIADPELLELVELELRELLTEYDFPGDDIPIIKGSALKALEGDAEAEKAIMELMDAVDDYIPEPVRDVDKPFLMPVEDVFSISGRGTVGTGRIERGVVKINEEVELVGIKPTKKTVVTGIEMFQKILDQGQAGDNAGLLFRGVGKDEIERGMVVAKPGTITPHTKFKAEVYILKKEEGGRHTPFFNNYRPQFYFRTTDVTGAVTLPEGVEMVMPGDNLSIEVELIVPIAMDENLRFAIREGGRTVGAGTVTQIIE</sequence>
<dbReference type="EC" id="3.6.5.3" evidence="2"/>
<dbReference type="EMBL" id="CP001101">
    <property type="protein sequence ID" value="ACE05202.1"/>
    <property type="molecule type" value="Genomic_DNA"/>
</dbReference>
<dbReference type="SMR" id="B3EP63"/>
<dbReference type="STRING" id="331678.Cphamn1_2298"/>
<dbReference type="KEGG" id="cpb:Cphamn1_2298"/>
<dbReference type="eggNOG" id="COG0050">
    <property type="taxonomic scope" value="Bacteria"/>
</dbReference>
<dbReference type="HOGENOM" id="CLU_007265_0_0_10"/>
<dbReference type="OrthoDB" id="9804504at2"/>
<dbReference type="GO" id="GO:0005829">
    <property type="term" value="C:cytosol"/>
    <property type="evidence" value="ECO:0007669"/>
    <property type="project" value="TreeGrafter"/>
</dbReference>
<dbReference type="GO" id="GO:0005525">
    <property type="term" value="F:GTP binding"/>
    <property type="evidence" value="ECO:0007669"/>
    <property type="project" value="UniProtKB-UniRule"/>
</dbReference>
<dbReference type="GO" id="GO:0003924">
    <property type="term" value="F:GTPase activity"/>
    <property type="evidence" value="ECO:0007669"/>
    <property type="project" value="InterPro"/>
</dbReference>
<dbReference type="GO" id="GO:0003746">
    <property type="term" value="F:translation elongation factor activity"/>
    <property type="evidence" value="ECO:0007669"/>
    <property type="project" value="UniProtKB-UniRule"/>
</dbReference>
<dbReference type="CDD" id="cd01884">
    <property type="entry name" value="EF_Tu"/>
    <property type="match status" value="1"/>
</dbReference>
<dbReference type="CDD" id="cd03697">
    <property type="entry name" value="EFTU_II"/>
    <property type="match status" value="1"/>
</dbReference>
<dbReference type="CDD" id="cd03707">
    <property type="entry name" value="EFTU_III"/>
    <property type="match status" value="1"/>
</dbReference>
<dbReference type="FunFam" id="2.40.30.10:FF:000001">
    <property type="entry name" value="Elongation factor Tu"/>
    <property type="match status" value="1"/>
</dbReference>
<dbReference type="FunFam" id="3.40.50.300:FF:000003">
    <property type="entry name" value="Elongation factor Tu"/>
    <property type="match status" value="1"/>
</dbReference>
<dbReference type="Gene3D" id="3.40.50.300">
    <property type="entry name" value="P-loop containing nucleotide triphosphate hydrolases"/>
    <property type="match status" value="1"/>
</dbReference>
<dbReference type="Gene3D" id="2.40.30.10">
    <property type="entry name" value="Translation factors"/>
    <property type="match status" value="2"/>
</dbReference>
<dbReference type="HAMAP" id="MF_00118_B">
    <property type="entry name" value="EF_Tu_B"/>
    <property type="match status" value="1"/>
</dbReference>
<dbReference type="InterPro" id="IPR041709">
    <property type="entry name" value="EF-Tu_GTP-bd"/>
</dbReference>
<dbReference type="InterPro" id="IPR050055">
    <property type="entry name" value="EF-Tu_GTPase"/>
</dbReference>
<dbReference type="InterPro" id="IPR004161">
    <property type="entry name" value="EFTu-like_2"/>
</dbReference>
<dbReference type="InterPro" id="IPR033720">
    <property type="entry name" value="EFTU_2"/>
</dbReference>
<dbReference type="InterPro" id="IPR031157">
    <property type="entry name" value="G_TR_CS"/>
</dbReference>
<dbReference type="InterPro" id="IPR027417">
    <property type="entry name" value="P-loop_NTPase"/>
</dbReference>
<dbReference type="InterPro" id="IPR005225">
    <property type="entry name" value="Small_GTP-bd"/>
</dbReference>
<dbReference type="InterPro" id="IPR000795">
    <property type="entry name" value="T_Tr_GTP-bd_dom"/>
</dbReference>
<dbReference type="InterPro" id="IPR009000">
    <property type="entry name" value="Transl_B-barrel_sf"/>
</dbReference>
<dbReference type="InterPro" id="IPR009001">
    <property type="entry name" value="Transl_elong_EF1A/Init_IF2_C"/>
</dbReference>
<dbReference type="InterPro" id="IPR004541">
    <property type="entry name" value="Transl_elong_EFTu/EF1A_bac/org"/>
</dbReference>
<dbReference type="InterPro" id="IPR004160">
    <property type="entry name" value="Transl_elong_EFTu/EF1A_C"/>
</dbReference>
<dbReference type="NCBIfam" id="TIGR00485">
    <property type="entry name" value="EF-Tu"/>
    <property type="match status" value="1"/>
</dbReference>
<dbReference type="NCBIfam" id="NF000766">
    <property type="entry name" value="PRK00049.1"/>
    <property type="match status" value="1"/>
</dbReference>
<dbReference type="NCBIfam" id="NF009372">
    <property type="entry name" value="PRK12735.1"/>
    <property type="match status" value="1"/>
</dbReference>
<dbReference type="NCBIfam" id="NF009373">
    <property type="entry name" value="PRK12736.1"/>
    <property type="match status" value="1"/>
</dbReference>
<dbReference type="NCBIfam" id="TIGR00231">
    <property type="entry name" value="small_GTP"/>
    <property type="match status" value="1"/>
</dbReference>
<dbReference type="PANTHER" id="PTHR43721:SF22">
    <property type="entry name" value="ELONGATION FACTOR TU, MITOCHONDRIAL"/>
    <property type="match status" value="1"/>
</dbReference>
<dbReference type="PANTHER" id="PTHR43721">
    <property type="entry name" value="ELONGATION FACTOR TU-RELATED"/>
    <property type="match status" value="1"/>
</dbReference>
<dbReference type="Pfam" id="PF00009">
    <property type="entry name" value="GTP_EFTU"/>
    <property type="match status" value="1"/>
</dbReference>
<dbReference type="Pfam" id="PF03144">
    <property type="entry name" value="GTP_EFTU_D2"/>
    <property type="match status" value="1"/>
</dbReference>
<dbReference type="Pfam" id="PF03143">
    <property type="entry name" value="GTP_EFTU_D3"/>
    <property type="match status" value="1"/>
</dbReference>
<dbReference type="PRINTS" id="PR00315">
    <property type="entry name" value="ELONGATNFCT"/>
</dbReference>
<dbReference type="SUPFAM" id="SSF50465">
    <property type="entry name" value="EF-Tu/eEF-1alpha/eIF2-gamma C-terminal domain"/>
    <property type="match status" value="1"/>
</dbReference>
<dbReference type="SUPFAM" id="SSF52540">
    <property type="entry name" value="P-loop containing nucleoside triphosphate hydrolases"/>
    <property type="match status" value="1"/>
</dbReference>
<dbReference type="SUPFAM" id="SSF50447">
    <property type="entry name" value="Translation proteins"/>
    <property type="match status" value="1"/>
</dbReference>
<dbReference type="PROSITE" id="PS00301">
    <property type="entry name" value="G_TR_1"/>
    <property type="match status" value="1"/>
</dbReference>
<dbReference type="PROSITE" id="PS51722">
    <property type="entry name" value="G_TR_2"/>
    <property type="match status" value="1"/>
</dbReference>
<feature type="chain" id="PRO_1000095055" description="Elongation factor Tu">
    <location>
        <begin position="1"/>
        <end position="393"/>
    </location>
</feature>
<feature type="domain" description="tr-type G">
    <location>
        <begin position="10"/>
        <end position="203"/>
    </location>
</feature>
<feature type="region of interest" description="G1" evidence="1">
    <location>
        <begin position="19"/>
        <end position="26"/>
    </location>
</feature>
<feature type="region of interest" description="G2" evidence="1">
    <location>
        <begin position="60"/>
        <end position="64"/>
    </location>
</feature>
<feature type="region of interest" description="G3" evidence="1">
    <location>
        <begin position="81"/>
        <end position="84"/>
    </location>
</feature>
<feature type="region of interest" description="G4" evidence="1">
    <location>
        <begin position="136"/>
        <end position="139"/>
    </location>
</feature>
<feature type="region of interest" description="G5" evidence="1">
    <location>
        <begin position="173"/>
        <end position="175"/>
    </location>
</feature>
<feature type="binding site" evidence="2">
    <location>
        <begin position="19"/>
        <end position="26"/>
    </location>
    <ligand>
        <name>GTP</name>
        <dbReference type="ChEBI" id="CHEBI:37565"/>
    </ligand>
</feature>
<feature type="binding site" evidence="2">
    <location>
        <position position="26"/>
    </location>
    <ligand>
        <name>Mg(2+)</name>
        <dbReference type="ChEBI" id="CHEBI:18420"/>
    </ligand>
</feature>
<feature type="binding site" evidence="2">
    <location>
        <begin position="81"/>
        <end position="85"/>
    </location>
    <ligand>
        <name>GTP</name>
        <dbReference type="ChEBI" id="CHEBI:37565"/>
    </ligand>
</feature>
<feature type="binding site" evidence="2">
    <location>
        <begin position="136"/>
        <end position="139"/>
    </location>
    <ligand>
        <name>GTP</name>
        <dbReference type="ChEBI" id="CHEBI:37565"/>
    </ligand>
</feature>
<evidence type="ECO:0000250" key="1"/>
<evidence type="ECO:0000255" key="2">
    <source>
        <dbReference type="HAMAP-Rule" id="MF_00118"/>
    </source>
</evidence>
<name>EFTU_CHLPB</name>
<protein>
    <recommendedName>
        <fullName evidence="2">Elongation factor Tu</fullName>
        <shortName evidence="2">EF-Tu</shortName>
        <ecNumber evidence="2">3.6.5.3</ecNumber>
    </recommendedName>
</protein>
<proteinExistence type="inferred from homology"/>
<reference key="1">
    <citation type="submission" date="2008-06" db="EMBL/GenBank/DDBJ databases">
        <title>Complete sequence of Chlorobium phaeobacteroides BS1.</title>
        <authorList>
            <consortium name="US DOE Joint Genome Institute"/>
            <person name="Lucas S."/>
            <person name="Copeland A."/>
            <person name="Lapidus A."/>
            <person name="Glavina del Rio T."/>
            <person name="Dalin E."/>
            <person name="Tice H."/>
            <person name="Bruce D."/>
            <person name="Goodwin L."/>
            <person name="Pitluck S."/>
            <person name="Schmutz J."/>
            <person name="Larimer F."/>
            <person name="Land M."/>
            <person name="Hauser L."/>
            <person name="Kyrpides N."/>
            <person name="Ovchinnikova G."/>
            <person name="Li T."/>
            <person name="Liu Z."/>
            <person name="Zhao F."/>
            <person name="Overmann J."/>
            <person name="Bryant D.A."/>
            <person name="Richardson P."/>
        </authorList>
    </citation>
    <scope>NUCLEOTIDE SEQUENCE [LARGE SCALE GENOMIC DNA]</scope>
    <source>
        <strain>BS1</strain>
    </source>
</reference>
<comment type="function">
    <text evidence="2">GTP hydrolase that promotes the GTP-dependent binding of aminoacyl-tRNA to the A-site of ribosomes during protein biosynthesis.</text>
</comment>
<comment type="catalytic activity">
    <reaction evidence="2">
        <text>GTP + H2O = GDP + phosphate + H(+)</text>
        <dbReference type="Rhea" id="RHEA:19669"/>
        <dbReference type="ChEBI" id="CHEBI:15377"/>
        <dbReference type="ChEBI" id="CHEBI:15378"/>
        <dbReference type="ChEBI" id="CHEBI:37565"/>
        <dbReference type="ChEBI" id="CHEBI:43474"/>
        <dbReference type="ChEBI" id="CHEBI:58189"/>
        <dbReference type="EC" id="3.6.5.3"/>
    </reaction>
    <physiologicalReaction direction="left-to-right" evidence="2">
        <dbReference type="Rhea" id="RHEA:19670"/>
    </physiologicalReaction>
</comment>
<comment type="subunit">
    <text evidence="2">Monomer.</text>
</comment>
<comment type="subcellular location">
    <subcellularLocation>
        <location evidence="2">Cytoplasm</location>
    </subcellularLocation>
</comment>
<comment type="similarity">
    <text evidence="2">Belongs to the TRAFAC class translation factor GTPase superfamily. Classic translation factor GTPase family. EF-Tu/EF-1A subfamily.</text>
</comment>
<gene>
    <name evidence="2" type="primary">tuf</name>
    <name type="ordered locus">Cphamn1_2298</name>
</gene>
<accession>B3EP63</accession>
<organism>
    <name type="scientific">Chlorobium phaeobacteroides (strain BS1)</name>
    <dbReference type="NCBI Taxonomy" id="331678"/>
    <lineage>
        <taxon>Bacteria</taxon>
        <taxon>Pseudomonadati</taxon>
        <taxon>Chlorobiota</taxon>
        <taxon>Chlorobiia</taxon>
        <taxon>Chlorobiales</taxon>
        <taxon>Chlorobiaceae</taxon>
        <taxon>Chlorobium/Pelodictyon group</taxon>
        <taxon>Chlorobium</taxon>
    </lineage>
</organism>